<accession>P9WMR7</accession>
<accession>L0T939</accession>
<accession>P64307</accession>
<accession>Q10649</accession>
<name>IXTPA_MYCTU</name>
<proteinExistence type="evidence at protein level"/>
<keyword id="KW-0378">Hydrolase</keyword>
<keyword id="KW-0460">Magnesium</keyword>
<keyword id="KW-0479">Metal-binding</keyword>
<keyword id="KW-0546">Nucleotide metabolism</keyword>
<keyword id="KW-0547">Nucleotide-binding</keyword>
<keyword id="KW-1185">Reference proteome</keyword>
<reference key="1">
    <citation type="journal article" date="1998" name="Nature">
        <title>Deciphering the biology of Mycobacterium tuberculosis from the complete genome sequence.</title>
        <authorList>
            <person name="Cole S.T."/>
            <person name="Brosch R."/>
            <person name="Parkhill J."/>
            <person name="Garnier T."/>
            <person name="Churcher C.M."/>
            <person name="Harris D.E."/>
            <person name="Gordon S.V."/>
            <person name="Eiglmeier K."/>
            <person name="Gas S."/>
            <person name="Barry C.E. III"/>
            <person name="Tekaia F."/>
            <person name="Badcock K."/>
            <person name="Basham D."/>
            <person name="Brown D."/>
            <person name="Chillingworth T."/>
            <person name="Connor R."/>
            <person name="Davies R.M."/>
            <person name="Devlin K."/>
            <person name="Feltwell T."/>
            <person name="Gentles S."/>
            <person name="Hamlin N."/>
            <person name="Holroyd S."/>
            <person name="Hornsby T."/>
            <person name="Jagels K."/>
            <person name="Krogh A."/>
            <person name="McLean J."/>
            <person name="Moule S."/>
            <person name="Murphy L.D."/>
            <person name="Oliver S."/>
            <person name="Osborne J."/>
            <person name="Quail M.A."/>
            <person name="Rajandream M.A."/>
            <person name="Rogers J."/>
            <person name="Rutter S."/>
            <person name="Seeger K."/>
            <person name="Skelton S."/>
            <person name="Squares S."/>
            <person name="Squares R."/>
            <person name="Sulston J.E."/>
            <person name="Taylor K."/>
            <person name="Whitehead S."/>
            <person name="Barrell B.G."/>
        </authorList>
    </citation>
    <scope>NUCLEOTIDE SEQUENCE [LARGE SCALE GENOMIC DNA]</scope>
    <source>
        <strain>ATCC 25618 / H37Rv</strain>
    </source>
</reference>
<reference key="2">
    <citation type="journal article" date="2011" name="Mol. Cell. Proteomics">
        <title>Proteogenomic analysis of Mycobacterium tuberculosis by high resolution mass spectrometry.</title>
        <authorList>
            <person name="Kelkar D.S."/>
            <person name="Kumar D."/>
            <person name="Kumar P."/>
            <person name="Balakrishnan L."/>
            <person name="Muthusamy B."/>
            <person name="Yadav A.K."/>
            <person name="Shrivastava P."/>
            <person name="Marimuthu A."/>
            <person name="Anand S."/>
            <person name="Sundaram H."/>
            <person name="Kingsbury R."/>
            <person name="Harsha H.C."/>
            <person name="Nair B."/>
            <person name="Prasad T.S."/>
            <person name="Chauhan D.S."/>
            <person name="Katoch K."/>
            <person name="Katoch V.M."/>
            <person name="Kumar P."/>
            <person name="Chaerkady R."/>
            <person name="Ramachandran S."/>
            <person name="Dash D."/>
            <person name="Pandey A."/>
        </authorList>
    </citation>
    <scope>IDENTIFICATION BY MASS SPECTROMETRY [LARGE SCALE ANALYSIS]</scope>
    <source>
        <strain>ATCC 25618 / H37Rv</strain>
    </source>
</reference>
<comment type="function">
    <text evidence="1">Pyrophosphatase that catalyzes the hydrolysis of nucleoside triphosphates to their monophosphate derivatives, with a high preference for the non-canonical purine nucleotides XTP (xanthosine triphosphate), dITP (deoxyinosine triphosphate) and ITP. Seems to function as a house-cleaning enzyme that removes non-canonical purine nucleotides from the nucleotide pool, thus preventing their incorporation into DNA/RNA and avoiding chromosomal lesions.</text>
</comment>
<comment type="catalytic activity">
    <reaction evidence="1">
        <text>XTP + H2O = XMP + diphosphate + H(+)</text>
        <dbReference type="Rhea" id="RHEA:28610"/>
        <dbReference type="ChEBI" id="CHEBI:15377"/>
        <dbReference type="ChEBI" id="CHEBI:15378"/>
        <dbReference type="ChEBI" id="CHEBI:33019"/>
        <dbReference type="ChEBI" id="CHEBI:57464"/>
        <dbReference type="ChEBI" id="CHEBI:61314"/>
        <dbReference type="EC" id="3.6.1.66"/>
    </reaction>
</comment>
<comment type="catalytic activity">
    <reaction evidence="1">
        <text>dITP + H2O = dIMP + diphosphate + H(+)</text>
        <dbReference type="Rhea" id="RHEA:28342"/>
        <dbReference type="ChEBI" id="CHEBI:15377"/>
        <dbReference type="ChEBI" id="CHEBI:15378"/>
        <dbReference type="ChEBI" id="CHEBI:33019"/>
        <dbReference type="ChEBI" id="CHEBI:61194"/>
        <dbReference type="ChEBI" id="CHEBI:61382"/>
        <dbReference type="EC" id="3.6.1.66"/>
    </reaction>
</comment>
<comment type="catalytic activity">
    <reaction evidence="1">
        <text>ITP + H2O = IMP + diphosphate + H(+)</text>
        <dbReference type="Rhea" id="RHEA:29399"/>
        <dbReference type="ChEBI" id="CHEBI:15377"/>
        <dbReference type="ChEBI" id="CHEBI:15378"/>
        <dbReference type="ChEBI" id="CHEBI:33019"/>
        <dbReference type="ChEBI" id="CHEBI:58053"/>
        <dbReference type="ChEBI" id="CHEBI:61402"/>
        <dbReference type="EC" id="3.6.1.66"/>
    </reaction>
</comment>
<comment type="cofactor">
    <cofactor evidence="1">
        <name>Mg(2+)</name>
        <dbReference type="ChEBI" id="CHEBI:18420"/>
    </cofactor>
    <text evidence="1">Binds 1 Mg(2+) ion per subunit.</text>
</comment>
<comment type="subunit">
    <text evidence="1">Homodimer.</text>
</comment>
<comment type="similarity">
    <text evidence="1">Belongs to the HAM1 NTPase family.</text>
</comment>
<dbReference type="EC" id="3.6.1.66" evidence="1"/>
<dbReference type="EMBL" id="AL123456">
    <property type="protein sequence ID" value="CCP44099.1"/>
    <property type="molecule type" value="Genomic_DNA"/>
</dbReference>
<dbReference type="PIR" id="D70739">
    <property type="entry name" value="D70739"/>
</dbReference>
<dbReference type="RefSeq" id="NP_215857.1">
    <property type="nucleotide sequence ID" value="NC_000962.3"/>
</dbReference>
<dbReference type="SMR" id="P9WMR7"/>
<dbReference type="FunCoup" id="P9WMR7">
    <property type="interactions" value="405"/>
</dbReference>
<dbReference type="STRING" id="83332.Rv1341"/>
<dbReference type="PaxDb" id="83332-Rv1341"/>
<dbReference type="DNASU" id="886861"/>
<dbReference type="GeneID" id="886861"/>
<dbReference type="KEGG" id="mtu:Rv1341"/>
<dbReference type="KEGG" id="mtv:RVBD_1341"/>
<dbReference type="PATRIC" id="fig|83332.111.peg.1496"/>
<dbReference type="TubercuList" id="Rv1341"/>
<dbReference type="eggNOG" id="COG0127">
    <property type="taxonomic scope" value="Bacteria"/>
</dbReference>
<dbReference type="InParanoid" id="P9WMR7"/>
<dbReference type="OrthoDB" id="9807456at2"/>
<dbReference type="PhylomeDB" id="P9WMR7"/>
<dbReference type="Proteomes" id="UP000001584">
    <property type="component" value="Chromosome"/>
</dbReference>
<dbReference type="GO" id="GO:0005737">
    <property type="term" value="C:cytoplasm"/>
    <property type="evidence" value="ECO:0000318"/>
    <property type="project" value="GO_Central"/>
</dbReference>
<dbReference type="GO" id="GO:0005829">
    <property type="term" value="C:cytosol"/>
    <property type="evidence" value="ECO:0000318"/>
    <property type="project" value="GO_Central"/>
</dbReference>
<dbReference type="GO" id="GO:0035870">
    <property type="term" value="F:dITP diphosphatase activity"/>
    <property type="evidence" value="ECO:0007669"/>
    <property type="project" value="RHEA"/>
</dbReference>
<dbReference type="GO" id="GO:0036220">
    <property type="term" value="F:ITP diphosphatase activity"/>
    <property type="evidence" value="ECO:0007669"/>
    <property type="project" value="UniProtKB-EC"/>
</dbReference>
<dbReference type="GO" id="GO:0046872">
    <property type="term" value="F:metal ion binding"/>
    <property type="evidence" value="ECO:0007669"/>
    <property type="project" value="UniProtKB-KW"/>
</dbReference>
<dbReference type="GO" id="GO:0047429">
    <property type="term" value="F:nucleoside triphosphate diphosphatase activity"/>
    <property type="evidence" value="ECO:0000318"/>
    <property type="project" value="GO_Central"/>
</dbReference>
<dbReference type="GO" id="GO:0000166">
    <property type="term" value="F:nucleotide binding"/>
    <property type="evidence" value="ECO:0007669"/>
    <property type="project" value="UniProtKB-KW"/>
</dbReference>
<dbReference type="GO" id="GO:0017111">
    <property type="term" value="F:ribonucleoside triphosphate phosphatase activity"/>
    <property type="evidence" value="ECO:0007669"/>
    <property type="project" value="InterPro"/>
</dbReference>
<dbReference type="GO" id="GO:0036222">
    <property type="term" value="F:XTP diphosphatase activity"/>
    <property type="evidence" value="ECO:0007669"/>
    <property type="project" value="RHEA"/>
</dbReference>
<dbReference type="GO" id="GO:0009143">
    <property type="term" value="P:nucleoside triphosphate catabolic process"/>
    <property type="evidence" value="ECO:0000318"/>
    <property type="project" value="GO_Central"/>
</dbReference>
<dbReference type="GO" id="GO:0009117">
    <property type="term" value="P:nucleotide metabolic process"/>
    <property type="evidence" value="ECO:0007669"/>
    <property type="project" value="UniProtKB-KW"/>
</dbReference>
<dbReference type="GO" id="GO:0009146">
    <property type="term" value="P:purine nucleoside triphosphate catabolic process"/>
    <property type="evidence" value="ECO:0007669"/>
    <property type="project" value="UniProtKB-UniRule"/>
</dbReference>
<dbReference type="CDD" id="cd00515">
    <property type="entry name" value="HAM1"/>
    <property type="match status" value="1"/>
</dbReference>
<dbReference type="FunFam" id="3.90.950.10:FF:000001">
    <property type="entry name" value="dITP/XTP pyrophosphatase"/>
    <property type="match status" value="1"/>
</dbReference>
<dbReference type="Gene3D" id="3.90.950.10">
    <property type="match status" value="1"/>
</dbReference>
<dbReference type="HAMAP" id="MF_01405">
    <property type="entry name" value="Non_canon_purine_NTPase"/>
    <property type="match status" value="1"/>
</dbReference>
<dbReference type="InterPro" id="IPR020922">
    <property type="entry name" value="dITP/XTP_pyrophosphatase"/>
</dbReference>
<dbReference type="InterPro" id="IPR029001">
    <property type="entry name" value="ITPase-like_fam"/>
</dbReference>
<dbReference type="InterPro" id="IPR002637">
    <property type="entry name" value="RdgB/HAM1"/>
</dbReference>
<dbReference type="NCBIfam" id="TIGR00042">
    <property type="entry name" value="RdgB/HAM1 family non-canonical purine NTP pyrophosphatase"/>
    <property type="match status" value="1"/>
</dbReference>
<dbReference type="PANTHER" id="PTHR11067:SF9">
    <property type="entry name" value="INOSINE TRIPHOSPHATE PYROPHOSPHATASE"/>
    <property type="match status" value="1"/>
</dbReference>
<dbReference type="PANTHER" id="PTHR11067">
    <property type="entry name" value="INOSINE TRIPHOSPHATE PYROPHOSPHATASE/HAM1 PROTEIN"/>
    <property type="match status" value="1"/>
</dbReference>
<dbReference type="Pfam" id="PF01725">
    <property type="entry name" value="Ham1p_like"/>
    <property type="match status" value="1"/>
</dbReference>
<dbReference type="SUPFAM" id="SSF52972">
    <property type="entry name" value="ITPase-like"/>
    <property type="match status" value="1"/>
</dbReference>
<organism>
    <name type="scientific">Mycobacterium tuberculosis (strain ATCC 25618 / H37Rv)</name>
    <dbReference type="NCBI Taxonomy" id="83332"/>
    <lineage>
        <taxon>Bacteria</taxon>
        <taxon>Bacillati</taxon>
        <taxon>Actinomycetota</taxon>
        <taxon>Actinomycetes</taxon>
        <taxon>Mycobacteriales</taxon>
        <taxon>Mycobacteriaceae</taxon>
        <taxon>Mycobacterium</taxon>
        <taxon>Mycobacterium tuberculosis complex</taxon>
    </lineage>
</organism>
<evidence type="ECO:0000255" key="1">
    <source>
        <dbReference type="HAMAP-Rule" id="MF_01405"/>
    </source>
</evidence>
<feature type="chain" id="PRO_0000178197" description="dITP/XTP pyrophosphatase">
    <location>
        <begin position="1"/>
        <end position="204"/>
    </location>
</feature>
<feature type="active site" description="Proton acceptor" evidence="1">
    <location>
        <position position="76"/>
    </location>
</feature>
<feature type="binding site" evidence="1">
    <location>
        <begin position="11"/>
        <end position="16"/>
    </location>
    <ligand>
        <name>substrate</name>
    </ligand>
</feature>
<feature type="binding site" evidence="1">
    <location>
        <position position="76"/>
    </location>
    <ligand>
        <name>Mg(2+)</name>
        <dbReference type="ChEBI" id="CHEBI:18420"/>
    </ligand>
</feature>
<feature type="binding site" evidence="1">
    <location>
        <position position="77"/>
    </location>
    <ligand>
        <name>substrate</name>
    </ligand>
</feature>
<feature type="binding site" evidence="1">
    <location>
        <begin position="158"/>
        <end position="161"/>
    </location>
    <ligand>
        <name>substrate</name>
    </ligand>
</feature>
<feature type="binding site" evidence="1">
    <location>
        <position position="181"/>
    </location>
    <ligand>
        <name>substrate</name>
    </ligand>
</feature>
<feature type="binding site" evidence="1">
    <location>
        <begin position="186"/>
        <end position="187"/>
    </location>
    <ligand>
        <name>substrate</name>
    </ligand>
</feature>
<protein>
    <recommendedName>
        <fullName evidence="1">dITP/XTP pyrophosphatase</fullName>
        <ecNumber evidence="1">3.6.1.66</ecNumber>
    </recommendedName>
    <alternativeName>
        <fullName evidence="1">Non-canonical purine NTP pyrophosphatase</fullName>
    </alternativeName>
    <alternativeName>
        <fullName evidence="1">Non-standard purine NTP pyrophosphatase</fullName>
    </alternativeName>
    <alternativeName>
        <fullName evidence="1">Nucleoside-triphosphate diphosphatase</fullName>
    </alternativeName>
    <alternativeName>
        <fullName evidence="1">Nucleoside-triphosphate pyrophosphatase</fullName>
        <shortName evidence="1">NTPase</shortName>
    </alternativeName>
</protein>
<gene>
    <name type="ordered locus">Rv1341</name>
    <name type="ORF">MTCY02B10.05</name>
    <name type="ORF">MTCY130.26</name>
</gene>
<sequence length="204" mass="21016">MALVTKLLVASRNRKKLAELRRVLDGAGLSGLTLLSLGDVSPLPETPETGVTFEDNALAKARDAFSATGLASVADDSGLEVAALGGMPGVLSARWSGRYGDDAANTALLLAQLCDVPDERRGAAFVSACALVSGSGEVVVRGEWPGTIAREPRGDGGFGYDPVFVPYGDDRTAAQLSPAEKDAVSHRGRALALLLPALRSLATG</sequence>